<dbReference type="EMBL" id="CP000083">
    <property type="protein sequence ID" value="AAZ24076.1"/>
    <property type="molecule type" value="Genomic_DNA"/>
</dbReference>
<dbReference type="RefSeq" id="WP_011042319.1">
    <property type="nucleotide sequence ID" value="NC_003910.7"/>
</dbReference>
<dbReference type="SMR" id="Q485P0"/>
<dbReference type="STRING" id="167879.CPS_1483"/>
<dbReference type="KEGG" id="cps:CPS_1483"/>
<dbReference type="eggNOG" id="COG2063">
    <property type="taxonomic scope" value="Bacteria"/>
</dbReference>
<dbReference type="HOGENOM" id="CLU_069313_0_2_6"/>
<dbReference type="Proteomes" id="UP000000547">
    <property type="component" value="Chromosome"/>
</dbReference>
<dbReference type="GO" id="GO:0009427">
    <property type="term" value="C:bacterial-type flagellum basal body, distal rod, L ring"/>
    <property type="evidence" value="ECO:0007669"/>
    <property type="project" value="InterPro"/>
</dbReference>
<dbReference type="GO" id="GO:0009279">
    <property type="term" value="C:cell outer membrane"/>
    <property type="evidence" value="ECO:0007669"/>
    <property type="project" value="UniProtKB-SubCell"/>
</dbReference>
<dbReference type="GO" id="GO:0003774">
    <property type="term" value="F:cytoskeletal motor activity"/>
    <property type="evidence" value="ECO:0007669"/>
    <property type="project" value="InterPro"/>
</dbReference>
<dbReference type="GO" id="GO:0071973">
    <property type="term" value="P:bacterial-type flagellum-dependent cell motility"/>
    <property type="evidence" value="ECO:0007669"/>
    <property type="project" value="InterPro"/>
</dbReference>
<dbReference type="HAMAP" id="MF_00415">
    <property type="entry name" value="FlgH"/>
    <property type="match status" value="1"/>
</dbReference>
<dbReference type="InterPro" id="IPR000527">
    <property type="entry name" value="Flag_Lring"/>
</dbReference>
<dbReference type="NCBIfam" id="NF001304">
    <property type="entry name" value="PRK00249.1-4"/>
    <property type="match status" value="1"/>
</dbReference>
<dbReference type="NCBIfam" id="NF009338">
    <property type="entry name" value="PRK12698.1"/>
    <property type="match status" value="1"/>
</dbReference>
<dbReference type="PANTHER" id="PTHR34933">
    <property type="entry name" value="FLAGELLAR L-RING PROTEIN"/>
    <property type="match status" value="1"/>
</dbReference>
<dbReference type="PANTHER" id="PTHR34933:SF1">
    <property type="entry name" value="FLAGELLAR L-RING PROTEIN"/>
    <property type="match status" value="1"/>
</dbReference>
<dbReference type="Pfam" id="PF02107">
    <property type="entry name" value="FlgH"/>
    <property type="match status" value="1"/>
</dbReference>
<dbReference type="PRINTS" id="PR01008">
    <property type="entry name" value="FLGLRINGFLGH"/>
</dbReference>
<dbReference type="PROSITE" id="PS51257">
    <property type="entry name" value="PROKAR_LIPOPROTEIN"/>
    <property type="match status" value="1"/>
</dbReference>
<proteinExistence type="inferred from homology"/>
<gene>
    <name evidence="1" type="primary">flgH</name>
    <name type="ordered locus">CPS_1483</name>
</gene>
<evidence type="ECO:0000255" key="1">
    <source>
        <dbReference type="HAMAP-Rule" id="MF_00415"/>
    </source>
</evidence>
<organism>
    <name type="scientific">Colwellia psychrerythraea (strain 34H / ATCC BAA-681)</name>
    <name type="common">Vibrio psychroerythus</name>
    <dbReference type="NCBI Taxonomy" id="167879"/>
    <lineage>
        <taxon>Bacteria</taxon>
        <taxon>Pseudomonadati</taxon>
        <taxon>Pseudomonadota</taxon>
        <taxon>Gammaproteobacteria</taxon>
        <taxon>Alteromonadales</taxon>
        <taxon>Colwelliaceae</taxon>
        <taxon>Colwellia</taxon>
    </lineage>
</organism>
<sequence length="236" mass="25864">MKNKNRLNTIKLLSISLLIAVTTACSNTVELSKALPNDPDFAPIMPEEEEERIVPSGSLFKPHYVNNIYSDSKAHRVGDIISVILSEKTQAKKNAKTELKKANETNLDAVTGLGGVPVSINGESLQFGISQDSNFKGDAKADQGNSLSGNISVHVLRVLPNGNLMIRGEKWLTLNNGDEYIRLTGVIRSKDINSNNTILSNKVANARIQYAGTGSFADSNEQGWLVKFFNSTWWPF</sequence>
<protein>
    <recommendedName>
        <fullName evidence="1">Flagellar L-ring protein</fullName>
    </recommendedName>
    <alternativeName>
        <fullName evidence="1">Basal body L-ring protein</fullName>
    </alternativeName>
</protein>
<reference key="1">
    <citation type="journal article" date="2005" name="Proc. Natl. Acad. Sci. U.S.A.">
        <title>The psychrophilic lifestyle as revealed by the genome sequence of Colwellia psychrerythraea 34H through genomic and proteomic analyses.</title>
        <authorList>
            <person name="Methe B.A."/>
            <person name="Nelson K.E."/>
            <person name="Deming J.W."/>
            <person name="Momen B."/>
            <person name="Melamud E."/>
            <person name="Zhang X."/>
            <person name="Moult J."/>
            <person name="Madupu R."/>
            <person name="Nelson W.C."/>
            <person name="Dodson R.J."/>
            <person name="Brinkac L.M."/>
            <person name="Daugherty S.C."/>
            <person name="Durkin A.S."/>
            <person name="DeBoy R.T."/>
            <person name="Kolonay J.F."/>
            <person name="Sullivan S.A."/>
            <person name="Zhou L."/>
            <person name="Davidsen T.M."/>
            <person name="Wu M."/>
            <person name="Huston A.L."/>
            <person name="Lewis M."/>
            <person name="Weaver B."/>
            <person name="Weidman J.F."/>
            <person name="Khouri H."/>
            <person name="Utterback T.R."/>
            <person name="Feldblyum T.V."/>
            <person name="Fraser C.M."/>
        </authorList>
    </citation>
    <scope>NUCLEOTIDE SEQUENCE [LARGE SCALE GENOMIC DNA]</scope>
    <source>
        <strain>34H / ATCC BAA-681</strain>
    </source>
</reference>
<comment type="function">
    <text evidence="1">Assembles around the rod to form the L-ring and probably protects the motor/basal body from shearing forces during rotation.</text>
</comment>
<comment type="subunit">
    <text evidence="1">The basal body constitutes a major portion of the flagellar organelle and consists of four rings (L,P,S, and M) mounted on a central rod.</text>
</comment>
<comment type="subcellular location">
    <subcellularLocation>
        <location evidence="1">Cell outer membrane</location>
        <topology evidence="1">Lipid-anchor</topology>
    </subcellularLocation>
    <subcellularLocation>
        <location evidence="1">Bacterial flagellum basal body</location>
    </subcellularLocation>
</comment>
<comment type="similarity">
    <text evidence="1">Belongs to the FlgH family.</text>
</comment>
<accession>Q485P0</accession>
<keyword id="KW-0975">Bacterial flagellum</keyword>
<keyword id="KW-0998">Cell outer membrane</keyword>
<keyword id="KW-0449">Lipoprotein</keyword>
<keyword id="KW-0472">Membrane</keyword>
<keyword id="KW-0564">Palmitate</keyword>
<keyword id="KW-0732">Signal</keyword>
<name>FLGH_COLP3</name>
<feature type="signal peptide" evidence="1">
    <location>
        <begin position="1"/>
        <end position="24"/>
    </location>
</feature>
<feature type="chain" id="PRO_0000236819" description="Flagellar L-ring protein">
    <location>
        <begin position="25"/>
        <end position="236"/>
    </location>
</feature>
<feature type="lipid moiety-binding region" description="N-palmitoyl cysteine" evidence="1">
    <location>
        <position position="25"/>
    </location>
</feature>
<feature type="lipid moiety-binding region" description="S-diacylglycerol cysteine" evidence="1">
    <location>
        <position position="25"/>
    </location>
</feature>